<organism>
    <name type="scientific">Oncorhynchus mykiss</name>
    <name type="common">Rainbow trout</name>
    <name type="synonym">Salmo gairdneri</name>
    <dbReference type="NCBI Taxonomy" id="8022"/>
    <lineage>
        <taxon>Eukaryota</taxon>
        <taxon>Metazoa</taxon>
        <taxon>Chordata</taxon>
        <taxon>Craniata</taxon>
        <taxon>Vertebrata</taxon>
        <taxon>Euteleostomi</taxon>
        <taxon>Actinopterygii</taxon>
        <taxon>Neopterygii</taxon>
        <taxon>Teleostei</taxon>
        <taxon>Protacanthopterygii</taxon>
        <taxon>Salmoniformes</taxon>
        <taxon>Salmonidae</taxon>
        <taxon>Salmoninae</taxon>
        <taxon>Oncorhynchus</taxon>
    </lineage>
</organism>
<name>COX5A_ONCMY</name>
<accession>P80328</accession>
<keyword id="KW-0903">Direct protein sequencing</keyword>
<keyword id="KW-0349">Heme</keyword>
<keyword id="KW-0408">Iron</keyword>
<keyword id="KW-0472">Membrane</keyword>
<keyword id="KW-0479">Metal-binding</keyword>
<keyword id="KW-0496">Mitochondrion</keyword>
<keyword id="KW-0999">Mitochondrion inner membrane</keyword>
<dbReference type="PIR" id="S43625">
    <property type="entry name" value="S43625"/>
</dbReference>
<dbReference type="UniPathway" id="UPA00705"/>
<dbReference type="Proteomes" id="UP000694395">
    <property type="component" value="Unplaced"/>
</dbReference>
<dbReference type="GO" id="GO:0005743">
    <property type="term" value="C:mitochondrial inner membrane"/>
    <property type="evidence" value="ECO:0007669"/>
    <property type="project" value="UniProtKB-SubCell"/>
</dbReference>
<dbReference type="GO" id="GO:0046872">
    <property type="term" value="F:metal ion binding"/>
    <property type="evidence" value="ECO:0007669"/>
    <property type="project" value="UniProtKB-KW"/>
</dbReference>
<dbReference type="GO" id="GO:0006119">
    <property type="term" value="P:oxidative phosphorylation"/>
    <property type="evidence" value="ECO:0007669"/>
    <property type="project" value="UniProtKB-UniPathway"/>
</dbReference>
<comment type="function">
    <text evidence="2">Component of the cytochrome c oxidase, the last enzyme in the mitochondrial electron transport chain which drives oxidative phosphorylation. The respiratory chain contains 3 multisubunit complexes succinate dehydrogenase (complex II, CII), ubiquinol-cytochrome c oxidoreductase (cytochrome b-c1 complex, complex III, CIII) and cytochrome c oxidase (complex IV, CIV), that cooperate to transfer electrons derived from NADH and succinate to molecular oxygen, creating an electrochemical gradient over the inner membrane that drives transmembrane transport and the ATP synthase. Cytochrome c oxidase is the component of the respiratory chain that catalyzes the reduction of oxygen to water. Electrons originating from reduced cytochrome c in the intermembrane space (IMS) are transferred via the dinuclear copper A center (CU(A)) of subunit 2 and heme A of subunit 1 to the active site in subunit 1, a binuclear center (BNC) formed by heme A3 and copper B (CU(B)). The BNC reduces molecular oxygen to 2 water molecules using 4 electrons from cytochrome c in the IMS and 4 protons from the mitochondrial matrix.</text>
</comment>
<comment type="pathway">
    <text evidence="2">Energy metabolism; oxidative phosphorylation.</text>
</comment>
<comment type="subunit">
    <text evidence="1 3">Component of the cytochrome c oxidase (complex IV, CIV), a multisubunit enzyme composed of 14 subunits. The complex is composed of a catalytic core of 3 subunits MT-CO1, MT-CO2 and MT-CO3, encoded in the mitochondrial DNA, and 11 supernumerary subunits COX4I, COX5A, COX5B, COX6A, COX6B, COX6C, COX7A, COX7B, COX7C, COX8 and NDUFA4, which are encoded in the nuclear genome. The complex exists as a monomer or a dimer and forms supercomplexes (SCs) in the inner mitochondrial membrane with NADH-ubiquinone oxidoreductase (complex I, CI) and ubiquinol-cytochrome c oxidoreductase (cytochrome b-c1 complex, complex III, CIII), resulting in different assemblies (supercomplex SCI(1)III(2)IV(1) and megacomplex MCI(2)III(2)IV(2)) (By similarity). Interacts with AFG1L (By similarity). Interacts with RAB5IF (By similarity).</text>
</comment>
<comment type="subcellular location">
    <subcellularLocation>
        <location evidence="1">Mitochondrion inner membrane</location>
        <topology evidence="1">Peripheral membrane protein</topology>
        <orientation evidence="1">Matrix side</orientation>
    </subcellularLocation>
</comment>
<comment type="similarity">
    <text evidence="4">Belongs to the cytochrome c oxidase subunit 5A family.</text>
</comment>
<gene>
    <name type="primary">cox5a</name>
</gene>
<evidence type="ECO:0000250" key="1">
    <source>
        <dbReference type="UniProtKB" id="P00426"/>
    </source>
</evidence>
<evidence type="ECO:0000250" key="2">
    <source>
        <dbReference type="UniProtKB" id="P00427"/>
    </source>
</evidence>
<evidence type="ECO:0000250" key="3">
    <source>
        <dbReference type="UniProtKB" id="P20674"/>
    </source>
</evidence>
<evidence type="ECO:0000305" key="4"/>
<proteinExistence type="evidence at protein level"/>
<reference key="1">
    <citation type="journal article" date="1994" name="Eur. J. Biochem.">
        <title>Identification of tissue-specific isoforms for subunits Vb and VIIa of cytochrome c oxidase isolated from rainbow trout.</title>
        <authorList>
            <person name="Freund R."/>
            <person name="Kadenbach B."/>
        </authorList>
    </citation>
    <scope>PROTEIN SEQUENCE</scope>
    <source>
        <tissue>Liver</tissue>
    </source>
</reference>
<feature type="chain" id="PRO_0000195214" description="Cytochrome c oxidase subunit 5A, mitochondrial">
    <location>
        <begin position="1"/>
        <end position="10" status="greater than"/>
    </location>
</feature>
<feature type="non-terminal residue">
    <location>
        <position position="10"/>
    </location>
</feature>
<sequence>SHAKVETDEE</sequence>
<protein>
    <recommendedName>
        <fullName>Cytochrome c oxidase subunit 5A, mitochondrial</fullName>
    </recommendedName>
    <alternativeName>
        <fullName>Cytochrome c oxidase polypeptide Va</fullName>
    </alternativeName>
</protein>